<gene>
    <name evidence="1" type="primary">infC</name>
    <name type="ordered locus">RF_0760</name>
</gene>
<reference key="1">
    <citation type="journal article" date="2005" name="PLoS Biol.">
        <title>The genome sequence of Rickettsia felis identifies the first putative conjugative plasmid in an obligate intracellular parasite.</title>
        <authorList>
            <person name="Ogata H."/>
            <person name="Renesto P."/>
            <person name="Audic S."/>
            <person name="Robert C."/>
            <person name="Blanc G."/>
            <person name="Fournier P.-E."/>
            <person name="Parinello H."/>
            <person name="Claverie J.-M."/>
            <person name="Raoult D."/>
        </authorList>
    </citation>
    <scope>NUCLEOTIDE SEQUENCE [LARGE SCALE GENOMIC DNA]</scope>
    <source>
        <strain>ATCC VR-1525 / URRWXCal2</strain>
    </source>
</reference>
<accession>Q4ULG2</accession>
<evidence type="ECO:0000255" key="1">
    <source>
        <dbReference type="HAMAP-Rule" id="MF_00080"/>
    </source>
</evidence>
<evidence type="ECO:0000305" key="2"/>
<dbReference type="EMBL" id="CP000053">
    <property type="protein sequence ID" value="AAY61611.1"/>
    <property type="status" value="ALT_INIT"/>
    <property type="molecule type" value="Genomic_DNA"/>
</dbReference>
<dbReference type="SMR" id="Q4ULG2"/>
<dbReference type="STRING" id="315456.RF_0760"/>
<dbReference type="KEGG" id="rfe:RF_0760"/>
<dbReference type="eggNOG" id="COG0290">
    <property type="taxonomic scope" value="Bacteria"/>
</dbReference>
<dbReference type="HOGENOM" id="CLU_054919_3_2_5"/>
<dbReference type="OrthoDB" id="9806014at2"/>
<dbReference type="Proteomes" id="UP000008548">
    <property type="component" value="Chromosome"/>
</dbReference>
<dbReference type="GO" id="GO:0005829">
    <property type="term" value="C:cytosol"/>
    <property type="evidence" value="ECO:0007669"/>
    <property type="project" value="TreeGrafter"/>
</dbReference>
<dbReference type="GO" id="GO:0016020">
    <property type="term" value="C:membrane"/>
    <property type="evidence" value="ECO:0007669"/>
    <property type="project" value="TreeGrafter"/>
</dbReference>
<dbReference type="GO" id="GO:0043022">
    <property type="term" value="F:ribosome binding"/>
    <property type="evidence" value="ECO:0007669"/>
    <property type="project" value="TreeGrafter"/>
</dbReference>
<dbReference type="GO" id="GO:0003743">
    <property type="term" value="F:translation initiation factor activity"/>
    <property type="evidence" value="ECO:0007669"/>
    <property type="project" value="UniProtKB-UniRule"/>
</dbReference>
<dbReference type="GO" id="GO:0032790">
    <property type="term" value="P:ribosome disassembly"/>
    <property type="evidence" value="ECO:0007669"/>
    <property type="project" value="TreeGrafter"/>
</dbReference>
<dbReference type="FunFam" id="3.10.20.80:FF:000001">
    <property type="entry name" value="Translation initiation factor IF-3"/>
    <property type="match status" value="1"/>
</dbReference>
<dbReference type="FunFam" id="3.30.110.10:FF:000001">
    <property type="entry name" value="Translation initiation factor IF-3"/>
    <property type="match status" value="1"/>
</dbReference>
<dbReference type="Gene3D" id="3.30.110.10">
    <property type="entry name" value="Translation initiation factor 3 (IF-3), C-terminal domain"/>
    <property type="match status" value="1"/>
</dbReference>
<dbReference type="Gene3D" id="3.10.20.80">
    <property type="entry name" value="Translation initiation factor 3 (IF-3), N-terminal domain"/>
    <property type="match status" value="1"/>
</dbReference>
<dbReference type="HAMAP" id="MF_00080">
    <property type="entry name" value="IF_3"/>
    <property type="match status" value="1"/>
</dbReference>
<dbReference type="InterPro" id="IPR036788">
    <property type="entry name" value="T_IF-3_C_sf"/>
</dbReference>
<dbReference type="InterPro" id="IPR036787">
    <property type="entry name" value="T_IF-3_N_sf"/>
</dbReference>
<dbReference type="InterPro" id="IPR019813">
    <property type="entry name" value="Translation_initiation_fac3_CS"/>
</dbReference>
<dbReference type="InterPro" id="IPR001288">
    <property type="entry name" value="Translation_initiation_fac_3"/>
</dbReference>
<dbReference type="InterPro" id="IPR019815">
    <property type="entry name" value="Translation_initiation_fac_3_C"/>
</dbReference>
<dbReference type="InterPro" id="IPR019814">
    <property type="entry name" value="Translation_initiation_fac_3_N"/>
</dbReference>
<dbReference type="NCBIfam" id="TIGR00168">
    <property type="entry name" value="infC"/>
    <property type="match status" value="1"/>
</dbReference>
<dbReference type="PANTHER" id="PTHR10938">
    <property type="entry name" value="TRANSLATION INITIATION FACTOR IF-3"/>
    <property type="match status" value="1"/>
</dbReference>
<dbReference type="PANTHER" id="PTHR10938:SF0">
    <property type="entry name" value="TRANSLATION INITIATION FACTOR IF-3, MITOCHONDRIAL"/>
    <property type="match status" value="1"/>
</dbReference>
<dbReference type="Pfam" id="PF00707">
    <property type="entry name" value="IF3_C"/>
    <property type="match status" value="1"/>
</dbReference>
<dbReference type="Pfam" id="PF05198">
    <property type="entry name" value="IF3_N"/>
    <property type="match status" value="1"/>
</dbReference>
<dbReference type="SUPFAM" id="SSF55200">
    <property type="entry name" value="Translation initiation factor IF3, C-terminal domain"/>
    <property type="match status" value="1"/>
</dbReference>
<dbReference type="SUPFAM" id="SSF54364">
    <property type="entry name" value="Translation initiation factor IF3, N-terminal domain"/>
    <property type="match status" value="1"/>
</dbReference>
<dbReference type="PROSITE" id="PS00938">
    <property type="entry name" value="IF3"/>
    <property type="match status" value="1"/>
</dbReference>
<comment type="function">
    <text evidence="1">IF-3 binds to the 30S ribosomal subunit and shifts the equilibrium between 70S ribosomes and their 50S and 30S subunits in favor of the free subunits, thus enhancing the availability of 30S subunits on which protein synthesis initiation begins.</text>
</comment>
<comment type="subunit">
    <text evidence="1">Monomer.</text>
</comment>
<comment type="subcellular location">
    <subcellularLocation>
        <location evidence="1">Cytoplasm</location>
    </subcellularLocation>
</comment>
<comment type="similarity">
    <text evidence="1">Belongs to the IF-3 family.</text>
</comment>
<comment type="sequence caution" evidence="2">
    <conflict type="erroneous initiation">
        <sequence resource="EMBL-CDS" id="AAY61611"/>
    </conflict>
</comment>
<protein>
    <recommendedName>
        <fullName evidence="1">Translation initiation factor IF-3</fullName>
    </recommendedName>
</protein>
<sequence length="185" mass="21541">MYLFINIIRRNFISKNNFPKANREIRAREVRLVGENGEMHGVVNIRKALDMAERASLDLVEISPNAVPPVCKILDFGKFKYESKKRLHEARKKQKIVVLKEMKFKPNISIGDFETKLRKIKEFLKDGDKVKISLWFKGREILHKEVGQELFKRIEVGLEGPIKIDQHAKMEGKQMIMIVSPDIKV</sequence>
<feature type="chain" id="PRO_0000277910" description="Translation initiation factor IF-3">
    <location>
        <begin position="1"/>
        <end position="185"/>
    </location>
</feature>
<proteinExistence type="inferred from homology"/>
<organism>
    <name type="scientific">Rickettsia felis (strain ATCC VR-1525 / URRWXCal2)</name>
    <name type="common">Rickettsia azadi</name>
    <dbReference type="NCBI Taxonomy" id="315456"/>
    <lineage>
        <taxon>Bacteria</taxon>
        <taxon>Pseudomonadati</taxon>
        <taxon>Pseudomonadota</taxon>
        <taxon>Alphaproteobacteria</taxon>
        <taxon>Rickettsiales</taxon>
        <taxon>Rickettsiaceae</taxon>
        <taxon>Rickettsieae</taxon>
        <taxon>Rickettsia</taxon>
        <taxon>spotted fever group</taxon>
    </lineage>
</organism>
<name>IF3_RICFE</name>
<keyword id="KW-0963">Cytoplasm</keyword>
<keyword id="KW-0396">Initiation factor</keyword>
<keyword id="KW-0648">Protein biosynthesis</keyword>